<comment type="function">
    <text evidence="1">Forms part of the ribosomal stalk, playing a central role in the interaction of the ribosome with GTP-bound translation factors.</text>
</comment>
<comment type="subunit">
    <text evidence="1">Part of the ribosomal stalk of the 50S ribosomal subunit. The N-terminus interacts with L11 and the large rRNA to form the base of the stalk. The C-terminus forms an elongated spine to which L12 dimers bind in a sequential fashion forming a multimeric L10(L12)X complex.</text>
</comment>
<comment type="similarity">
    <text evidence="1">Belongs to the universal ribosomal protein uL10 family.</text>
</comment>
<gene>
    <name evidence="1" type="primary">rplJ</name>
    <name type="ordered locus">OTBS_0210</name>
</gene>
<feature type="chain" id="PRO_1000005549" description="Large ribosomal subunit protein uL10">
    <location>
        <begin position="1"/>
        <end position="169"/>
    </location>
</feature>
<keyword id="KW-1185">Reference proteome</keyword>
<keyword id="KW-0687">Ribonucleoprotein</keyword>
<keyword id="KW-0689">Ribosomal protein</keyword>
<keyword id="KW-0694">RNA-binding</keyword>
<keyword id="KW-0699">rRNA-binding</keyword>
<proteinExistence type="inferred from homology"/>
<sequence length="169" mass="18829">MLYSKKKEFVKFLEGIYKNANTIVAIHYHGLTVAQLTQIRKDLRVSGARLKIVKNTLAKIAVANLKIKQADIFSGPIAIAYSEDYITVPKVILRFADQYPSLKVVGGFVDQKVATMNDIEQLASLATSESHKGNFLSLLQIPIRRFATVSHAPLVKLVTILKNYVNNKS</sequence>
<dbReference type="EMBL" id="AM494475">
    <property type="protein sequence ID" value="CAM79276.1"/>
    <property type="molecule type" value="Genomic_DNA"/>
</dbReference>
<dbReference type="RefSeq" id="WP_011944334.1">
    <property type="nucleotide sequence ID" value="NC_009488.1"/>
</dbReference>
<dbReference type="SMR" id="A5CC95"/>
<dbReference type="GeneID" id="89460016"/>
<dbReference type="KEGG" id="ots:OTBS_0210"/>
<dbReference type="eggNOG" id="COG0244">
    <property type="taxonomic scope" value="Bacteria"/>
</dbReference>
<dbReference type="HOGENOM" id="CLU_092227_1_2_5"/>
<dbReference type="Proteomes" id="UP000001565">
    <property type="component" value="Chromosome"/>
</dbReference>
<dbReference type="GO" id="GO:0015934">
    <property type="term" value="C:large ribosomal subunit"/>
    <property type="evidence" value="ECO:0007669"/>
    <property type="project" value="InterPro"/>
</dbReference>
<dbReference type="GO" id="GO:0070180">
    <property type="term" value="F:large ribosomal subunit rRNA binding"/>
    <property type="evidence" value="ECO:0007669"/>
    <property type="project" value="UniProtKB-UniRule"/>
</dbReference>
<dbReference type="GO" id="GO:0003735">
    <property type="term" value="F:structural constituent of ribosome"/>
    <property type="evidence" value="ECO:0007669"/>
    <property type="project" value="InterPro"/>
</dbReference>
<dbReference type="GO" id="GO:0006412">
    <property type="term" value="P:translation"/>
    <property type="evidence" value="ECO:0007669"/>
    <property type="project" value="UniProtKB-UniRule"/>
</dbReference>
<dbReference type="CDD" id="cd05797">
    <property type="entry name" value="Ribosomal_L10"/>
    <property type="match status" value="1"/>
</dbReference>
<dbReference type="Gene3D" id="3.30.70.1730">
    <property type="match status" value="1"/>
</dbReference>
<dbReference type="HAMAP" id="MF_00362">
    <property type="entry name" value="Ribosomal_uL10"/>
    <property type="match status" value="1"/>
</dbReference>
<dbReference type="InterPro" id="IPR001790">
    <property type="entry name" value="Ribosomal_uL10"/>
</dbReference>
<dbReference type="InterPro" id="IPR043141">
    <property type="entry name" value="Ribosomal_uL10-like_sf"/>
</dbReference>
<dbReference type="InterPro" id="IPR022973">
    <property type="entry name" value="Ribosomal_uL10_bac"/>
</dbReference>
<dbReference type="InterPro" id="IPR047865">
    <property type="entry name" value="Ribosomal_uL10_bac_type"/>
</dbReference>
<dbReference type="InterPro" id="IPR002363">
    <property type="entry name" value="Ribosomal_uL10_CS_bac"/>
</dbReference>
<dbReference type="NCBIfam" id="NF000955">
    <property type="entry name" value="PRK00099.1-1"/>
    <property type="match status" value="1"/>
</dbReference>
<dbReference type="PANTHER" id="PTHR11560">
    <property type="entry name" value="39S RIBOSOMAL PROTEIN L10, MITOCHONDRIAL"/>
    <property type="match status" value="1"/>
</dbReference>
<dbReference type="Pfam" id="PF00466">
    <property type="entry name" value="Ribosomal_L10"/>
    <property type="match status" value="1"/>
</dbReference>
<dbReference type="SUPFAM" id="SSF160369">
    <property type="entry name" value="Ribosomal protein L10-like"/>
    <property type="match status" value="1"/>
</dbReference>
<dbReference type="PROSITE" id="PS01109">
    <property type="entry name" value="RIBOSOMAL_L10"/>
    <property type="match status" value="1"/>
</dbReference>
<name>RL10_ORITB</name>
<accession>A5CC95</accession>
<reference key="1">
    <citation type="journal article" date="2007" name="Proc. Natl. Acad. Sci. U.S.A.">
        <title>The Orientia tsutsugamushi genome reveals massive proliferation of conjugative type IV secretion system and host-cell interaction genes.</title>
        <authorList>
            <person name="Cho N.-H."/>
            <person name="Kim H.-R."/>
            <person name="Lee J.-H."/>
            <person name="Kim S.-Y."/>
            <person name="Kim J."/>
            <person name="Cha S."/>
            <person name="Kim S.-Y."/>
            <person name="Darby A.C."/>
            <person name="Fuxelius H.-H."/>
            <person name="Yin J."/>
            <person name="Kim J.H."/>
            <person name="Kim J."/>
            <person name="Lee S.J."/>
            <person name="Koh Y.-S."/>
            <person name="Jang W.-J."/>
            <person name="Park K.-H."/>
            <person name="Andersson S.G.E."/>
            <person name="Choi M.-S."/>
            <person name="Kim I.-S."/>
        </authorList>
    </citation>
    <scope>NUCLEOTIDE SEQUENCE [LARGE SCALE GENOMIC DNA]</scope>
    <source>
        <strain>Boryong</strain>
    </source>
</reference>
<organism>
    <name type="scientific">Orientia tsutsugamushi (strain Boryong)</name>
    <name type="common">Rickettsia tsutsugamushi</name>
    <dbReference type="NCBI Taxonomy" id="357244"/>
    <lineage>
        <taxon>Bacteria</taxon>
        <taxon>Pseudomonadati</taxon>
        <taxon>Pseudomonadota</taxon>
        <taxon>Alphaproteobacteria</taxon>
        <taxon>Rickettsiales</taxon>
        <taxon>Rickettsiaceae</taxon>
        <taxon>Rickettsieae</taxon>
        <taxon>Orientia</taxon>
    </lineage>
</organism>
<evidence type="ECO:0000255" key="1">
    <source>
        <dbReference type="HAMAP-Rule" id="MF_00362"/>
    </source>
</evidence>
<evidence type="ECO:0000305" key="2"/>
<protein>
    <recommendedName>
        <fullName evidence="1">Large ribosomal subunit protein uL10</fullName>
    </recommendedName>
    <alternativeName>
        <fullName evidence="2">50S ribosomal protein L10</fullName>
    </alternativeName>
</protein>